<comment type="function">
    <text evidence="1">Specifically dimethylates two adjacent adenosines (A1518 and A1519) in the loop of a conserved hairpin near the 3'-end of 16S rRNA in the 30S particle. May play a critical role in biogenesis of 30S subunits.</text>
</comment>
<comment type="catalytic activity">
    <reaction evidence="1">
        <text>adenosine(1518)/adenosine(1519) in 16S rRNA + 4 S-adenosyl-L-methionine = N(6)-dimethyladenosine(1518)/N(6)-dimethyladenosine(1519) in 16S rRNA + 4 S-adenosyl-L-homocysteine + 4 H(+)</text>
        <dbReference type="Rhea" id="RHEA:19609"/>
        <dbReference type="Rhea" id="RHEA-COMP:10232"/>
        <dbReference type="Rhea" id="RHEA-COMP:10233"/>
        <dbReference type="ChEBI" id="CHEBI:15378"/>
        <dbReference type="ChEBI" id="CHEBI:57856"/>
        <dbReference type="ChEBI" id="CHEBI:59789"/>
        <dbReference type="ChEBI" id="CHEBI:74411"/>
        <dbReference type="ChEBI" id="CHEBI:74493"/>
        <dbReference type="EC" id="2.1.1.182"/>
    </reaction>
</comment>
<comment type="subcellular location">
    <subcellularLocation>
        <location evidence="1">Cytoplasm</location>
    </subcellularLocation>
</comment>
<comment type="similarity">
    <text evidence="1">Belongs to the class I-like SAM-binding methyltransferase superfamily. rRNA adenine N(6)-methyltransferase family. RsmA subfamily.</text>
</comment>
<reference key="1">
    <citation type="submission" date="2008-05" db="EMBL/GenBank/DDBJ databases">
        <title>Complete sequence of Chlorobium limicola DSM 245.</title>
        <authorList>
            <consortium name="US DOE Joint Genome Institute"/>
            <person name="Lucas S."/>
            <person name="Copeland A."/>
            <person name="Lapidus A."/>
            <person name="Glavina del Rio T."/>
            <person name="Dalin E."/>
            <person name="Tice H."/>
            <person name="Bruce D."/>
            <person name="Goodwin L."/>
            <person name="Pitluck S."/>
            <person name="Schmutz J."/>
            <person name="Larimer F."/>
            <person name="Land M."/>
            <person name="Hauser L."/>
            <person name="Kyrpides N."/>
            <person name="Ovchinnikova G."/>
            <person name="Zhao F."/>
            <person name="Li T."/>
            <person name="Liu Z."/>
            <person name="Overmann J."/>
            <person name="Bryant D.A."/>
            <person name="Richardson P."/>
        </authorList>
    </citation>
    <scope>NUCLEOTIDE SEQUENCE [LARGE SCALE GENOMIC DNA]</scope>
    <source>
        <strain>DSM 245 / NBRC 103803 / 6330</strain>
    </source>
</reference>
<accession>B3EIC2</accession>
<evidence type="ECO:0000255" key="1">
    <source>
        <dbReference type="HAMAP-Rule" id="MF_00607"/>
    </source>
</evidence>
<dbReference type="EC" id="2.1.1.182" evidence="1"/>
<dbReference type="EMBL" id="CP001097">
    <property type="protein sequence ID" value="ACD89952.1"/>
    <property type="molecule type" value="Genomic_DNA"/>
</dbReference>
<dbReference type="RefSeq" id="WP_012465831.1">
    <property type="nucleotide sequence ID" value="NC_010803.1"/>
</dbReference>
<dbReference type="SMR" id="B3EIC2"/>
<dbReference type="STRING" id="290315.Clim_0873"/>
<dbReference type="KEGG" id="cli:Clim_0873"/>
<dbReference type="eggNOG" id="COG0030">
    <property type="taxonomic scope" value="Bacteria"/>
</dbReference>
<dbReference type="HOGENOM" id="CLU_041220_0_1_10"/>
<dbReference type="OrthoDB" id="9814755at2"/>
<dbReference type="Proteomes" id="UP000008841">
    <property type="component" value="Chromosome"/>
</dbReference>
<dbReference type="GO" id="GO:0005829">
    <property type="term" value="C:cytosol"/>
    <property type="evidence" value="ECO:0007669"/>
    <property type="project" value="TreeGrafter"/>
</dbReference>
<dbReference type="GO" id="GO:0052908">
    <property type="term" value="F:16S rRNA (adenine(1518)-N(6)/adenine(1519)-N(6))-dimethyltransferase activity"/>
    <property type="evidence" value="ECO:0007669"/>
    <property type="project" value="UniProtKB-EC"/>
</dbReference>
<dbReference type="GO" id="GO:0003723">
    <property type="term" value="F:RNA binding"/>
    <property type="evidence" value="ECO:0007669"/>
    <property type="project" value="UniProtKB-KW"/>
</dbReference>
<dbReference type="CDD" id="cd02440">
    <property type="entry name" value="AdoMet_MTases"/>
    <property type="match status" value="1"/>
</dbReference>
<dbReference type="Gene3D" id="1.10.8.100">
    <property type="entry name" value="Ribosomal RNA adenine dimethylase-like, domain 2"/>
    <property type="match status" value="1"/>
</dbReference>
<dbReference type="Gene3D" id="3.40.50.150">
    <property type="entry name" value="Vaccinia Virus protein VP39"/>
    <property type="match status" value="1"/>
</dbReference>
<dbReference type="HAMAP" id="MF_00607">
    <property type="entry name" value="16SrRNA_methyltr_A"/>
    <property type="match status" value="1"/>
</dbReference>
<dbReference type="InterPro" id="IPR001737">
    <property type="entry name" value="KsgA/Erm"/>
</dbReference>
<dbReference type="InterPro" id="IPR023165">
    <property type="entry name" value="rRNA_Ade_diMease-like_C"/>
</dbReference>
<dbReference type="InterPro" id="IPR020596">
    <property type="entry name" value="rRNA_Ade_Mease_Trfase_CS"/>
</dbReference>
<dbReference type="InterPro" id="IPR020598">
    <property type="entry name" value="rRNA_Ade_methylase_Trfase_N"/>
</dbReference>
<dbReference type="InterPro" id="IPR011530">
    <property type="entry name" value="rRNA_adenine_dimethylase"/>
</dbReference>
<dbReference type="InterPro" id="IPR029063">
    <property type="entry name" value="SAM-dependent_MTases_sf"/>
</dbReference>
<dbReference type="NCBIfam" id="TIGR00755">
    <property type="entry name" value="ksgA"/>
    <property type="match status" value="1"/>
</dbReference>
<dbReference type="PANTHER" id="PTHR11727">
    <property type="entry name" value="DIMETHYLADENOSINE TRANSFERASE"/>
    <property type="match status" value="1"/>
</dbReference>
<dbReference type="PANTHER" id="PTHR11727:SF7">
    <property type="entry name" value="DIMETHYLADENOSINE TRANSFERASE-RELATED"/>
    <property type="match status" value="1"/>
</dbReference>
<dbReference type="Pfam" id="PF00398">
    <property type="entry name" value="RrnaAD"/>
    <property type="match status" value="1"/>
</dbReference>
<dbReference type="SMART" id="SM00650">
    <property type="entry name" value="rADc"/>
    <property type="match status" value="1"/>
</dbReference>
<dbReference type="SUPFAM" id="SSF53335">
    <property type="entry name" value="S-adenosyl-L-methionine-dependent methyltransferases"/>
    <property type="match status" value="1"/>
</dbReference>
<dbReference type="PROSITE" id="PS01131">
    <property type="entry name" value="RRNA_A_DIMETH"/>
    <property type="match status" value="1"/>
</dbReference>
<dbReference type="PROSITE" id="PS51689">
    <property type="entry name" value="SAM_RNA_A_N6_MT"/>
    <property type="match status" value="1"/>
</dbReference>
<sequence>MTKVEYKHTEIAVKKQLGQNFLTDRNITRKIVRLSGAKPEENILEIGPGFGALTKEIIEVCPSFTVVEKDPKLAAFIRTEYPQLNVIEADFLKIDLEAVTGARKLRILGNIPYSITSPILFRLLEYRRCFMHATLMMQHEVAMRIVAVPSTKEYGILAVQLQAFFDVSYGFRVGRKVFKPQPGVDSAVITITPKEHVPLSDPEGFSRFVRCAFHQRRKTLLNNLKESYNLDAVPSEVLKRRAEALAIQELFELFKEMKPKMLS</sequence>
<gene>
    <name evidence="1" type="primary">rsmA</name>
    <name evidence="1" type="synonym">ksgA</name>
    <name type="ordered locus">Clim_0873</name>
</gene>
<proteinExistence type="inferred from homology"/>
<protein>
    <recommendedName>
        <fullName evidence="1">Ribosomal RNA small subunit methyltransferase A</fullName>
        <ecNumber evidence="1">2.1.1.182</ecNumber>
    </recommendedName>
    <alternativeName>
        <fullName evidence="1">16S rRNA (adenine(1518)-N(6)/adenine(1519)-N(6))-dimethyltransferase</fullName>
    </alternativeName>
    <alternativeName>
        <fullName evidence="1">16S rRNA dimethyladenosine transferase</fullName>
    </alternativeName>
    <alternativeName>
        <fullName evidence="1">16S rRNA dimethylase</fullName>
    </alternativeName>
    <alternativeName>
        <fullName evidence="1">S-adenosylmethionine-6-N', N'-adenosyl(rRNA) dimethyltransferase</fullName>
    </alternativeName>
</protein>
<organism>
    <name type="scientific">Chlorobium limicola (strain DSM 245 / NBRC 103803 / 6330)</name>
    <dbReference type="NCBI Taxonomy" id="290315"/>
    <lineage>
        <taxon>Bacteria</taxon>
        <taxon>Pseudomonadati</taxon>
        <taxon>Chlorobiota</taxon>
        <taxon>Chlorobiia</taxon>
        <taxon>Chlorobiales</taxon>
        <taxon>Chlorobiaceae</taxon>
        <taxon>Chlorobium/Pelodictyon group</taxon>
        <taxon>Chlorobium</taxon>
    </lineage>
</organism>
<feature type="chain" id="PRO_1000130256" description="Ribosomal RNA small subunit methyltransferase A">
    <location>
        <begin position="1"/>
        <end position="263"/>
    </location>
</feature>
<feature type="binding site" evidence="1">
    <location>
        <position position="20"/>
    </location>
    <ligand>
        <name>S-adenosyl-L-methionine</name>
        <dbReference type="ChEBI" id="CHEBI:59789"/>
    </ligand>
</feature>
<feature type="binding site" evidence="1">
    <location>
        <position position="22"/>
    </location>
    <ligand>
        <name>S-adenosyl-L-methionine</name>
        <dbReference type="ChEBI" id="CHEBI:59789"/>
    </ligand>
</feature>
<feature type="binding site" evidence="1">
    <location>
        <position position="47"/>
    </location>
    <ligand>
        <name>S-adenosyl-L-methionine</name>
        <dbReference type="ChEBI" id="CHEBI:59789"/>
    </ligand>
</feature>
<feature type="binding site" evidence="1">
    <location>
        <position position="68"/>
    </location>
    <ligand>
        <name>S-adenosyl-L-methionine</name>
        <dbReference type="ChEBI" id="CHEBI:59789"/>
    </ligand>
</feature>
<feature type="binding site" evidence="1">
    <location>
        <position position="90"/>
    </location>
    <ligand>
        <name>S-adenosyl-L-methionine</name>
        <dbReference type="ChEBI" id="CHEBI:59789"/>
    </ligand>
</feature>
<feature type="binding site" evidence="1">
    <location>
        <position position="110"/>
    </location>
    <ligand>
        <name>S-adenosyl-L-methionine</name>
        <dbReference type="ChEBI" id="CHEBI:59789"/>
    </ligand>
</feature>
<keyword id="KW-0963">Cytoplasm</keyword>
<keyword id="KW-0489">Methyltransferase</keyword>
<keyword id="KW-0694">RNA-binding</keyword>
<keyword id="KW-0698">rRNA processing</keyword>
<keyword id="KW-0949">S-adenosyl-L-methionine</keyword>
<keyword id="KW-0808">Transferase</keyword>
<name>RSMA_CHLL2</name>